<reference key="1">
    <citation type="journal article" date="2005" name="PLoS Biol.">
        <title>The genome sequence of Rickettsia felis identifies the first putative conjugative plasmid in an obligate intracellular parasite.</title>
        <authorList>
            <person name="Ogata H."/>
            <person name="Renesto P."/>
            <person name="Audic S."/>
            <person name="Robert C."/>
            <person name="Blanc G."/>
            <person name="Fournier P.-E."/>
            <person name="Parinello H."/>
            <person name="Claverie J.-M."/>
            <person name="Raoult D."/>
        </authorList>
    </citation>
    <scope>NUCLEOTIDE SEQUENCE [LARGE SCALE GENOMIC DNA]</scope>
    <source>
        <strain>ATCC VR-1525 / URRWXCal2</strain>
    </source>
</reference>
<comment type="function">
    <text evidence="1">Digests double-stranded RNA. Involved in the processing of primary rRNA transcript to yield the immediate precursors to the large and small rRNAs (23S and 16S). Processes some mRNAs, and tRNAs when they are encoded in the rRNA operon. Processes pre-crRNA and tracrRNA of type II CRISPR loci if present in the organism.</text>
</comment>
<comment type="catalytic activity">
    <reaction evidence="1">
        <text>Endonucleolytic cleavage to 5'-phosphomonoester.</text>
        <dbReference type="EC" id="3.1.26.3"/>
    </reaction>
</comment>
<comment type="cofactor">
    <cofactor evidence="1">
        <name>Mg(2+)</name>
        <dbReference type="ChEBI" id="CHEBI:18420"/>
    </cofactor>
</comment>
<comment type="subunit">
    <text evidence="1">Homodimer.</text>
</comment>
<comment type="subcellular location">
    <subcellularLocation>
        <location evidence="1">Cytoplasm</location>
    </subcellularLocation>
</comment>
<comment type="similarity">
    <text evidence="1">Belongs to the ribonuclease III family.</text>
</comment>
<proteinExistence type="inferred from homology"/>
<keyword id="KW-0963">Cytoplasm</keyword>
<keyword id="KW-0255">Endonuclease</keyword>
<keyword id="KW-0378">Hydrolase</keyword>
<keyword id="KW-0460">Magnesium</keyword>
<keyword id="KW-0479">Metal-binding</keyword>
<keyword id="KW-0507">mRNA processing</keyword>
<keyword id="KW-0540">Nuclease</keyword>
<keyword id="KW-0694">RNA-binding</keyword>
<keyword id="KW-0698">rRNA processing</keyword>
<keyword id="KW-0699">rRNA-binding</keyword>
<keyword id="KW-0819">tRNA processing</keyword>
<name>RNC_RICFE</name>
<evidence type="ECO:0000255" key="1">
    <source>
        <dbReference type="HAMAP-Rule" id="MF_00104"/>
    </source>
</evidence>
<feature type="chain" id="PRO_0000228575" description="Ribonuclease 3">
    <location>
        <begin position="1"/>
        <end position="225"/>
    </location>
</feature>
<feature type="domain" description="RNase III" evidence="1">
    <location>
        <begin position="4"/>
        <end position="133"/>
    </location>
</feature>
<feature type="domain" description="DRBM" evidence="1">
    <location>
        <begin position="158"/>
        <end position="225"/>
    </location>
</feature>
<feature type="active site" evidence="1">
    <location>
        <position position="50"/>
    </location>
</feature>
<feature type="active site" evidence="1">
    <location>
        <position position="122"/>
    </location>
</feature>
<feature type="binding site" evidence="1">
    <location>
        <position position="46"/>
    </location>
    <ligand>
        <name>Mg(2+)</name>
        <dbReference type="ChEBI" id="CHEBI:18420"/>
    </ligand>
</feature>
<feature type="binding site" evidence="1">
    <location>
        <position position="119"/>
    </location>
    <ligand>
        <name>Mg(2+)</name>
        <dbReference type="ChEBI" id="CHEBI:18420"/>
    </ligand>
</feature>
<feature type="binding site" evidence="1">
    <location>
        <position position="122"/>
    </location>
    <ligand>
        <name>Mg(2+)</name>
        <dbReference type="ChEBI" id="CHEBI:18420"/>
    </ligand>
</feature>
<dbReference type="EC" id="3.1.26.3" evidence="1"/>
<dbReference type="EMBL" id="CP000053">
    <property type="protein sequence ID" value="AAY62027.1"/>
    <property type="molecule type" value="Genomic_DNA"/>
</dbReference>
<dbReference type="SMR" id="Q4UKA8"/>
<dbReference type="STRING" id="315456.RF_1176"/>
<dbReference type="KEGG" id="rfe:RF_1176"/>
<dbReference type="eggNOG" id="COG0571">
    <property type="taxonomic scope" value="Bacteria"/>
</dbReference>
<dbReference type="HOGENOM" id="CLU_000907_1_1_5"/>
<dbReference type="OrthoDB" id="9805026at2"/>
<dbReference type="Proteomes" id="UP000008548">
    <property type="component" value="Chromosome"/>
</dbReference>
<dbReference type="GO" id="GO:0005737">
    <property type="term" value="C:cytoplasm"/>
    <property type="evidence" value="ECO:0007669"/>
    <property type="project" value="UniProtKB-SubCell"/>
</dbReference>
<dbReference type="GO" id="GO:0003725">
    <property type="term" value="F:double-stranded RNA binding"/>
    <property type="evidence" value="ECO:0007669"/>
    <property type="project" value="TreeGrafter"/>
</dbReference>
<dbReference type="GO" id="GO:0046872">
    <property type="term" value="F:metal ion binding"/>
    <property type="evidence" value="ECO:0007669"/>
    <property type="project" value="UniProtKB-KW"/>
</dbReference>
<dbReference type="GO" id="GO:0004525">
    <property type="term" value="F:ribonuclease III activity"/>
    <property type="evidence" value="ECO:0007669"/>
    <property type="project" value="UniProtKB-UniRule"/>
</dbReference>
<dbReference type="GO" id="GO:0019843">
    <property type="term" value="F:rRNA binding"/>
    <property type="evidence" value="ECO:0007669"/>
    <property type="project" value="UniProtKB-KW"/>
</dbReference>
<dbReference type="GO" id="GO:0006397">
    <property type="term" value="P:mRNA processing"/>
    <property type="evidence" value="ECO:0007669"/>
    <property type="project" value="UniProtKB-UniRule"/>
</dbReference>
<dbReference type="GO" id="GO:0010468">
    <property type="term" value="P:regulation of gene expression"/>
    <property type="evidence" value="ECO:0007669"/>
    <property type="project" value="TreeGrafter"/>
</dbReference>
<dbReference type="GO" id="GO:0006364">
    <property type="term" value="P:rRNA processing"/>
    <property type="evidence" value="ECO:0007669"/>
    <property type="project" value="UniProtKB-UniRule"/>
</dbReference>
<dbReference type="GO" id="GO:0008033">
    <property type="term" value="P:tRNA processing"/>
    <property type="evidence" value="ECO:0007669"/>
    <property type="project" value="UniProtKB-KW"/>
</dbReference>
<dbReference type="CDD" id="cd10845">
    <property type="entry name" value="DSRM_RNAse_III_family"/>
    <property type="match status" value="1"/>
</dbReference>
<dbReference type="CDD" id="cd00593">
    <property type="entry name" value="RIBOc"/>
    <property type="match status" value="1"/>
</dbReference>
<dbReference type="FunFam" id="1.10.1520.10:FF:000001">
    <property type="entry name" value="Ribonuclease 3"/>
    <property type="match status" value="1"/>
</dbReference>
<dbReference type="Gene3D" id="3.30.160.20">
    <property type="match status" value="1"/>
</dbReference>
<dbReference type="Gene3D" id="1.10.1520.10">
    <property type="entry name" value="Ribonuclease III domain"/>
    <property type="match status" value="1"/>
</dbReference>
<dbReference type="HAMAP" id="MF_00104">
    <property type="entry name" value="RNase_III"/>
    <property type="match status" value="1"/>
</dbReference>
<dbReference type="InterPro" id="IPR014720">
    <property type="entry name" value="dsRBD_dom"/>
</dbReference>
<dbReference type="InterPro" id="IPR011907">
    <property type="entry name" value="RNase_III"/>
</dbReference>
<dbReference type="InterPro" id="IPR000999">
    <property type="entry name" value="RNase_III_dom"/>
</dbReference>
<dbReference type="InterPro" id="IPR036389">
    <property type="entry name" value="RNase_III_sf"/>
</dbReference>
<dbReference type="NCBIfam" id="TIGR02191">
    <property type="entry name" value="RNaseIII"/>
    <property type="match status" value="1"/>
</dbReference>
<dbReference type="PANTHER" id="PTHR11207:SF0">
    <property type="entry name" value="RIBONUCLEASE 3"/>
    <property type="match status" value="1"/>
</dbReference>
<dbReference type="PANTHER" id="PTHR11207">
    <property type="entry name" value="RIBONUCLEASE III"/>
    <property type="match status" value="1"/>
</dbReference>
<dbReference type="Pfam" id="PF00035">
    <property type="entry name" value="dsrm"/>
    <property type="match status" value="1"/>
</dbReference>
<dbReference type="Pfam" id="PF14622">
    <property type="entry name" value="Ribonucleas_3_3"/>
    <property type="match status" value="1"/>
</dbReference>
<dbReference type="SMART" id="SM00358">
    <property type="entry name" value="DSRM"/>
    <property type="match status" value="1"/>
</dbReference>
<dbReference type="SMART" id="SM00535">
    <property type="entry name" value="RIBOc"/>
    <property type="match status" value="1"/>
</dbReference>
<dbReference type="SUPFAM" id="SSF54768">
    <property type="entry name" value="dsRNA-binding domain-like"/>
    <property type="match status" value="1"/>
</dbReference>
<dbReference type="SUPFAM" id="SSF69065">
    <property type="entry name" value="RNase III domain-like"/>
    <property type="match status" value="1"/>
</dbReference>
<dbReference type="PROSITE" id="PS50137">
    <property type="entry name" value="DS_RBD"/>
    <property type="match status" value="1"/>
</dbReference>
<dbReference type="PROSITE" id="PS00517">
    <property type="entry name" value="RNASE_3_1"/>
    <property type="match status" value="1"/>
</dbReference>
<dbReference type="PROSITE" id="PS50142">
    <property type="entry name" value="RNASE_3_2"/>
    <property type="match status" value="1"/>
</dbReference>
<organism>
    <name type="scientific">Rickettsia felis (strain ATCC VR-1525 / URRWXCal2)</name>
    <name type="common">Rickettsia azadi</name>
    <dbReference type="NCBI Taxonomy" id="315456"/>
    <lineage>
        <taxon>Bacteria</taxon>
        <taxon>Pseudomonadati</taxon>
        <taxon>Pseudomonadota</taxon>
        <taxon>Alphaproteobacteria</taxon>
        <taxon>Rickettsiales</taxon>
        <taxon>Rickettsiaceae</taxon>
        <taxon>Rickettsieae</taxon>
        <taxon>Rickettsia</taxon>
        <taxon>spotted fever group</taxon>
    </lineage>
</organism>
<sequence length="225" mass="25658">MVAFEKLEKLLGYSFKNKELLIEALSHPSLRQHHEYKDDKDYERLEFLGDAVLNLVVTEILFKNFANYNEGNLAKIRSYLVCKETICVVGTKLTLKDYIIMTHGEEVAGGRDNPNNIENATEALIAAIYLDSNIETTRNIIGKLWAEFIKIQNLTDYDPKTALQEWAQASSHHLPIYRLIKREGAAHSSTFTVLVKVKDYKQIGTGHSIKEAEKNAARKLLHKLK</sequence>
<protein>
    <recommendedName>
        <fullName evidence="1">Ribonuclease 3</fullName>
        <ecNumber evidence="1">3.1.26.3</ecNumber>
    </recommendedName>
    <alternativeName>
        <fullName evidence="1">Ribonuclease III</fullName>
        <shortName evidence="1">RNase III</shortName>
    </alternativeName>
</protein>
<gene>
    <name evidence="1" type="primary">rnc</name>
    <name type="ordered locus">RF_1176</name>
</gene>
<accession>Q4UKA8</accession>